<dbReference type="EMBL" id="CP000937">
    <property type="protein sequence ID" value="ABZ86797.1"/>
    <property type="molecule type" value="Genomic_DNA"/>
</dbReference>
<dbReference type="SMR" id="B0U0Y1"/>
<dbReference type="KEGG" id="fph:Fphi_1925"/>
<dbReference type="eggNOG" id="COG0255">
    <property type="taxonomic scope" value="Bacteria"/>
</dbReference>
<dbReference type="HOGENOM" id="CLU_158491_1_2_6"/>
<dbReference type="GO" id="GO:0022625">
    <property type="term" value="C:cytosolic large ribosomal subunit"/>
    <property type="evidence" value="ECO:0007669"/>
    <property type="project" value="TreeGrafter"/>
</dbReference>
<dbReference type="GO" id="GO:0003735">
    <property type="term" value="F:structural constituent of ribosome"/>
    <property type="evidence" value="ECO:0007669"/>
    <property type="project" value="InterPro"/>
</dbReference>
<dbReference type="GO" id="GO:0006412">
    <property type="term" value="P:translation"/>
    <property type="evidence" value="ECO:0007669"/>
    <property type="project" value="UniProtKB-UniRule"/>
</dbReference>
<dbReference type="CDD" id="cd00427">
    <property type="entry name" value="Ribosomal_L29_HIP"/>
    <property type="match status" value="1"/>
</dbReference>
<dbReference type="FunFam" id="1.10.287.310:FF:000001">
    <property type="entry name" value="50S ribosomal protein L29"/>
    <property type="match status" value="1"/>
</dbReference>
<dbReference type="Gene3D" id="6.10.140.1970">
    <property type="match status" value="1"/>
</dbReference>
<dbReference type="HAMAP" id="MF_00374">
    <property type="entry name" value="Ribosomal_uL29"/>
    <property type="match status" value="1"/>
</dbReference>
<dbReference type="InterPro" id="IPR050063">
    <property type="entry name" value="Ribosomal_protein_uL29"/>
</dbReference>
<dbReference type="InterPro" id="IPR001854">
    <property type="entry name" value="Ribosomal_uL29"/>
</dbReference>
<dbReference type="InterPro" id="IPR018254">
    <property type="entry name" value="Ribosomal_uL29_CS"/>
</dbReference>
<dbReference type="InterPro" id="IPR036049">
    <property type="entry name" value="Ribosomal_uL29_sf"/>
</dbReference>
<dbReference type="NCBIfam" id="TIGR00012">
    <property type="entry name" value="L29"/>
    <property type="match status" value="1"/>
</dbReference>
<dbReference type="PANTHER" id="PTHR10916">
    <property type="entry name" value="60S RIBOSOMAL PROTEIN L35/50S RIBOSOMAL PROTEIN L29"/>
    <property type="match status" value="1"/>
</dbReference>
<dbReference type="PANTHER" id="PTHR10916:SF0">
    <property type="entry name" value="LARGE RIBOSOMAL SUBUNIT PROTEIN UL29C"/>
    <property type="match status" value="1"/>
</dbReference>
<dbReference type="Pfam" id="PF00831">
    <property type="entry name" value="Ribosomal_L29"/>
    <property type="match status" value="1"/>
</dbReference>
<dbReference type="SUPFAM" id="SSF46561">
    <property type="entry name" value="Ribosomal protein L29 (L29p)"/>
    <property type="match status" value="1"/>
</dbReference>
<dbReference type="PROSITE" id="PS00579">
    <property type="entry name" value="RIBOSOMAL_L29"/>
    <property type="match status" value="1"/>
</dbReference>
<reference key="1">
    <citation type="submission" date="2007-12" db="EMBL/GenBank/DDBJ databases">
        <title>Complete sequence of chromosome of Francisella philomiragia subsp. philomiragia ATCC 25017.</title>
        <authorList>
            <consortium name="US DOE Joint Genome Institute"/>
            <person name="Copeland A."/>
            <person name="Lucas S."/>
            <person name="Lapidus A."/>
            <person name="Barry K."/>
            <person name="Detter J.C."/>
            <person name="Glavina del Rio T."/>
            <person name="Hammon N."/>
            <person name="Israni S."/>
            <person name="Dalin E."/>
            <person name="Tice H."/>
            <person name="Pitluck S."/>
            <person name="Chain P."/>
            <person name="Malfatti S."/>
            <person name="Shin M."/>
            <person name="Vergez L."/>
            <person name="Schmutz J."/>
            <person name="Larimer F."/>
            <person name="Land M."/>
            <person name="Hauser L."/>
            <person name="Richardson P."/>
        </authorList>
    </citation>
    <scope>NUCLEOTIDE SEQUENCE [LARGE SCALE GENOMIC DNA]</scope>
    <source>
        <strain>ATCC 25017 / CCUG 19701 / FSC 153 / O#319-036</strain>
    </source>
</reference>
<accession>B0U0Y1</accession>
<proteinExistence type="inferred from homology"/>
<feature type="chain" id="PRO_1000079887" description="Large ribosomal subunit protein uL29">
    <location>
        <begin position="1"/>
        <end position="66"/>
    </location>
</feature>
<evidence type="ECO:0000255" key="1">
    <source>
        <dbReference type="HAMAP-Rule" id="MF_00374"/>
    </source>
</evidence>
<evidence type="ECO:0000305" key="2"/>
<keyword id="KW-0687">Ribonucleoprotein</keyword>
<keyword id="KW-0689">Ribosomal protein</keyword>
<organism>
    <name type="scientific">Francisella philomiragia subsp. philomiragia (strain ATCC 25017 / CCUG 19701 / FSC 153 / O#319-036)</name>
    <dbReference type="NCBI Taxonomy" id="484022"/>
    <lineage>
        <taxon>Bacteria</taxon>
        <taxon>Pseudomonadati</taxon>
        <taxon>Pseudomonadota</taxon>
        <taxon>Gammaproteobacteria</taxon>
        <taxon>Thiotrichales</taxon>
        <taxon>Francisellaceae</taxon>
        <taxon>Francisella</taxon>
    </lineage>
</organism>
<comment type="similarity">
    <text evidence="1">Belongs to the universal ribosomal protein uL29 family.</text>
</comment>
<name>RL29_FRAP2</name>
<sequence length="66" mass="7757">MKRKDTLKDFRGKSIDQLQEAKIELLQQLFSLRMQKGTGQLKKNHLFKSAKRDIARINTIISEKNK</sequence>
<gene>
    <name evidence="1" type="primary">rpmC</name>
    <name type="ordered locus">Fphi_1925</name>
</gene>
<protein>
    <recommendedName>
        <fullName evidence="1">Large ribosomal subunit protein uL29</fullName>
    </recommendedName>
    <alternativeName>
        <fullName evidence="2">50S ribosomal protein L29</fullName>
    </alternativeName>
</protein>